<comment type="function">
    <text>The epsilon chain is a beta-type chain of early mammalian embryonic hemoglobin.</text>
</comment>
<comment type="subunit">
    <text>Heterotetramer of two alpha chains and two epsilon chains in early embryonic hemoglobin Gower-2; two zeta chains and two epsilon chains in early embryonic hemoglobin Gower-1.</text>
</comment>
<comment type="tissue specificity">
    <text>Red blood cells.</text>
</comment>
<comment type="similarity">
    <text evidence="2">Belongs to the globin family.</text>
</comment>
<accession>Q7JFR7</accession>
<proteinExistence type="evidence at transcript level"/>
<protein>
    <recommendedName>
        <fullName>Hemoglobin subunit epsilon</fullName>
    </recommendedName>
    <alternativeName>
        <fullName>Epsilon-globin</fullName>
    </alternativeName>
    <alternativeName>
        <fullName>Hemoglobin epsilon chain</fullName>
    </alternativeName>
</protein>
<gene>
    <name type="primary">HBE1</name>
</gene>
<organism>
    <name type="scientific">Cebus kaapori</name>
    <name type="common">Ka'apor capuchin</name>
    <name type="synonym">Cebus olivaceus kaapori</name>
    <dbReference type="NCBI Taxonomy" id="37294"/>
    <lineage>
        <taxon>Eukaryota</taxon>
        <taxon>Metazoa</taxon>
        <taxon>Chordata</taxon>
        <taxon>Craniata</taxon>
        <taxon>Vertebrata</taxon>
        <taxon>Euteleostomi</taxon>
        <taxon>Mammalia</taxon>
        <taxon>Eutheria</taxon>
        <taxon>Euarchontoglires</taxon>
        <taxon>Primates</taxon>
        <taxon>Haplorrhini</taxon>
        <taxon>Platyrrhini</taxon>
        <taxon>Cebidae</taxon>
        <taxon>Cebinae</taxon>
        <taxon>Cebus</taxon>
    </lineage>
</organism>
<feature type="chain" id="PRO_0000053201" description="Hemoglobin subunit epsilon">
    <location>
        <begin position="1"/>
        <end position="147"/>
    </location>
</feature>
<feature type="domain" description="Globin" evidence="2">
    <location>
        <begin position="3"/>
        <end position="147"/>
    </location>
</feature>
<feature type="binding site" description="distal binding residue" evidence="2">
    <location>
        <position position="64"/>
    </location>
    <ligand>
        <name>heme b</name>
        <dbReference type="ChEBI" id="CHEBI:60344"/>
    </ligand>
    <ligandPart>
        <name>Fe</name>
        <dbReference type="ChEBI" id="CHEBI:18248"/>
    </ligandPart>
</feature>
<feature type="binding site" description="proximal binding residue" evidence="2">
    <location>
        <position position="93"/>
    </location>
    <ligand>
        <name>heme b</name>
        <dbReference type="ChEBI" id="CHEBI:60344"/>
    </ligand>
    <ligandPart>
        <name>Fe</name>
        <dbReference type="ChEBI" id="CHEBI:18248"/>
    </ligandPart>
</feature>
<feature type="modified residue" description="Phosphoserine" evidence="1">
    <location>
        <position position="14"/>
    </location>
</feature>
<feature type="modified residue" description="Phosphoserine" evidence="1">
    <location>
        <position position="51"/>
    </location>
</feature>
<reference key="1">
    <citation type="journal article" date="1995" name="Mol. Phylogenet. Evol.">
        <title>DNA evidence on the phylogenetic systematics of New World monkeys: support for the sister-grouping of Cebus and Saimiri from two unlinked nuclear genes.</title>
        <authorList>
            <person name="Harada M.L."/>
            <person name="Schneider H."/>
            <person name="Schneider M.P.C."/>
            <person name="Sampaio I."/>
            <person name="Czelusniak J."/>
            <person name="Goodman M."/>
        </authorList>
    </citation>
    <scope>NUCLEOTIDE SEQUENCE [GENOMIC DNA]</scope>
    <source>
        <tissue>Lymphocyte</tissue>
    </source>
</reference>
<name>HBE_CEBKA</name>
<dbReference type="EMBL" id="U18608">
    <property type="protein sequence ID" value="AAB40981.1"/>
    <property type="molecule type" value="Genomic_DNA"/>
</dbReference>
<dbReference type="SMR" id="Q7JFR7"/>
<dbReference type="GO" id="GO:0072562">
    <property type="term" value="C:blood microparticle"/>
    <property type="evidence" value="ECO:0007669"/>
    <property type="project" value="TreeGrafter"/>
</dbReference>
<dbReference type="GO" id="GO:0031838">
    <property type="term" value="C:haptoglobin-hemoglobin complex"/>
    <property type="evidence" value="ECO:0007669"/>
    <property type="project" value="TreeGrafter"/>
</dbReference>
<dbReference type="GO" id="GO:0005833">
    <property type="term" value="C:hemoglobin complex"/>
    <property type="evidence" value="ECO:0007669"/>
    <property type="project" value="InterPro"/>
</dbReference>
<dbReference type="GO" id="GO:0031720">
    <property type="term" value="F:haptoglobin binding"/>
    <property type="evidence" value="ECO:0007669"/>
    <property type="project" value="TreeGrafter"/>
</dbReference>
<dbReference type="GO" id="GO:0020037">
    <property type="term" value="F:heme binding"/>
    <property type="evidence" value="ECO:0007669"/>
    <property type="project" value="InterPro"/>
</dbReference>
<dbReference type="GO" id="GO:0031721">
    <property type="term" value="F:hemoglobin alpha binding"/>
    <property type="evidence" value="ECO:0007669"/>
    <property type="project" value="TreeGrafter"/>
</dbReference>
<dbReference type="GO" id="GO:0046872">
    <property type="term" value="F:metal ion binding"/>
    <property type="evidence" value="ECO:0007669"/>
    <property type="project" value="UniProtKB-KW"/>
</dbReference>
<dbReference type="GO" id="GO:0043177">
    <property type="term" value="F:organic acid binding"/>
    <property type="evidence" value="ECO:0007669"/>
    <property type="project" value="TreeGrafter"/>
</dbReference>
<dbReference type="GO" id="GO:0019825">
    <property type="term" value="F:oxygen binding"/>
    <property type="evidence" value="ECO:0007669"/>
    <property type="project" value="InterPro"/>
</dbReference>
<dbReference type="GO" id="GO:0005344">
    <property type="term" value="F:oxygen carrier activity"/>
    <property type="evidence" value="ECO:0007669"/>
    <property type="project" value="UniProtKB-KW"/>
</dbReference>
<dbReference type="GO" id="GO:0004601">
    <property type="term" value="F:peroxidase activity"/>
    <property type="evidence" value="ECO:0007669"/>
    <property type="project" value="TreeGrafter"/>
</dbReference>
<dbReference type="GO" id="GO:0042744">
    <property type="term" value="P:hydrogen peroxide catabolic process"/>
    <property type="evidence" value="ECO:0007669"/>
    <property type="project" value="TreeGrafter"/>
</dbReference>
<dbReference type="CDD" id="cd08925">
    <property type="entry name" value="Hb-beta-like"/>
    <property type="match status" value="1"/>
</dbReference>
<dbReference type="FunFam" id="1.10.490.10:FF:000001">
    <property type="entry name" value="Hemoglobin subunit beta"/>
    <property type="match status" value="1"/>
</dbReference>
<dbReference type="Gene3D" id="1.10.490.10">
    <property type="entry name" value="Globins"/>
    <property type="match status" value="1"/>
</dbReference>
<dbReference type="InterPro" id="IPR000971">
    <property type="entry name" value="Globin"/>
</dbReference>
<dbReference type="InterPro" id="IPR009050">
    <property type="entry name" value="Globin-like_sf"/>
</dbReference>
<dbReference type="InterPro" id="IPR012292">
    <property type="entry name" value="Globin/Proto"/>
</dbReference>
<dbReference type="InterPro" id="IPR002337">
    <property type="entry name" value="Hemoglobin_b"/>
</dbReference>
<dbReference type="InterPro" id="IPR050056">
    <property type="entry name" value="Hemoglobin_oxygen_transport"/>
</dbReference>
<dbReference type="PANTHER" id="PTHR11442">
    <property type="entry name" value="HEMOGLOBIN FAMILY MEMBER"/>
    <property type="match status" value="1"/>
</dbReference>
<dbReference type="PANTHER" id="PTHR11442:SF7">
    <property type="entry name" value="HEMOGLOBIN SUBUNIT EPSILON"/>
    <property type="match status" value="1"/>
</dbReference>
<dbReference type="Pfam" id="PF00042">
    <property type="entry name" value="Globin"/>
    <property type="match status" value="1"/>
</dbReference>
<dbReference type="PRINTS" id="PR00814">
    <property type="entry name" value="BETAHAEM"/>
</dbReference>
<dbReference type="SUPFAM" id="SSF46458">
    <property type="entry name" value="Globin-like"/>
    <property type="match status" value="1"/>
</dbReference>
<dbReference type="PROSITE" id="PS01033">
    <property type="entry name" value="GLOBIN"/>
    <property type="match status" value="1"/>
</dbReference>
<evidence type="ECO:0000250" key="1">
    <source>
        <dbReference type="UniProtKB" id="P02100"/>
    </source>
</evidence>
<evidence type="ECO:0000255" key="2">
    <source>
        <dbReference type="PROSITE-ProRule" id="PRU00238"/>
    </source>
</evidence>
<keyword id="KW-0349">Heme</keyword>
<keyword id="KW-0408">Iron</keyword>
<keyword id="KW-0479">Metal-binding</keyword>
<keyword id="KW-0561">Oxygen transport</keyword>
<keyword id="KW-0597">Phosphoprotein</keyword>
<keyword id="KW-0813">Transport</keyword>
<sequence>MVHFTAEEKVAITSLWSKMNVEEAGGEALGRLLVVYPWTQRFFDNFGNLSSPSAILGNPKVKAHGKKVLTSFGDAIKNMDNLKTTFAKLSELHCDKLHVDPENFRLLGNVMVIILATHFGKEFTPEVQAAWQKLVSAVAIALGHKYH</sequence>